<evidence type="ECO:0000255" key="1">
    <source>
        <dbReference type="HAMAP-Rule" id="MF_00251"/>
    </source>
</evidence>
<evidence type="ECO:0000305" key="2"/>
<organism>
    <name type="scientific">Geobacillus kaustophilus (strain HTA426)</name>
    <dbReference type="NCBI Taxonomy" id="235909"/>
    <lineage>
        <taxon>Bacteria</taxon>
        <taxon>Bacillati</taxon>
        <taxon>Bacillota</taxon>
        <taxon>Bacilli</taxon>
        <taxon>Bacillales</taxon>
        <taxon>Anoxybacillaceae</taxon>
        <taxon>Geobacillus</taxon>
        <taxon>Geobacillus thermoleovorans group</taxon>
    </lineage>
</organism>
<reference key="1">
    <citation type="journal article" date="2004" name="Nucleic Acids Res.">
        <title>Thermoadaptation trait revealed by the genome sequence of thermophilic Geobacillus kaustophilus.</title>
        <authorList>
            <person name="Takami H."/>
            <person name="Takaki Y."/>
            <person name="Chee G.-J."/>
            <person name="Nishi S."/>
            <person name="Shimamura S."/>
            <person name="Suzuki H."/>
            <person name="Matsui S."/>
            <person name="Uchiyama I."/>
        </authorList>
    </citation>
    <scope>NUCLEOTIDE SEQUENCE [LARGE SCALE GENOMIC DNA]</scope>
    <source>
        <strain>HTA426</strain>
    </source>
</reference>
<proteinExistence type="inferred from homology"/>
<dbReference type="EMBL" id="BA000043">
    <property type="protein sequence ID" value="BAD74415.1"/>
    <property type="molecule type" value="Genomic_DNA"/>
</dbReference>
<dbReference type="RefSeq" id="WP_011229643.1">
    <property type="nucleotide sequence ID" value="NC_006510.1"/>
</dbReference>
<dbReference type="SMR" id="Q5L3R5"/>
<dbReference type="STRING" id="235909.GK0130"/>
<dbReference type="GeneID" id="32062118"/>
<dbReference type="KEGG" id="gka:GK0130"/>
<dbReference type="eggNOG" id="COG0257">
    <property type="taxonomic scope" value="Bacteria"/>
</dbReference>
<dbReference type="HOGENOM" id="CLU_135723_6_2_9"/>
<dbReference type="Proteomes" id="UP000001172">
    <property type="component" value="Chromosome"/>
</dbReference>
<dbReference type="GO" id="GO:0005737">
    <property type="term" value="C:cytoplasm"/>
    <property type="evidence" value="ECO:0007669"/>
    <property type="project" value="UniProtKB-ARBA"/>
</dbReference>
<dbReference type="GO" id="GO:1990904">
    <property type="term" value="C:ribonucleoprotein complex"/>
    <property type="evidence" value="ECO:0007669"/>
    <property type="project" value="UniProtKB-KW"/>
</dbReference>
<dbReference type="GO" id="GO:0005840">
    <property type="term" value="C:ribosome"/>
    <property type="evidence" value="ECO:0007669"/>
    <property type="project" value="UniProtKB-KW"/>
</dbReference>
<dbReference type="GO" id="GO:0003735">
    <property type="term" value="F:structural constituent of ribosome"/>
    <property type="evidence" value="ECO:0007669"/>
    <property type="project" value="InterPro"/>
</dbReference>
<dbReference type="GO" id="GO:0006412">
    <property type="term" value="P:translation"/>
    <property type="evidence" value="ECO:0007669"/>
    <property type="project" value="UniProtKB-UniRule"/>
</dbReference>
<dbReference type="HAMAP" id="MF_00251">
    <property type="entry name" value="Ribosomal_bL36"/>
    <property type="match status" value="1"/>
</dbReference>
<dbReference type="InterPro" id="IPR000473">
    <property type="entry name" value="Ribosomal_bL36"/>
</dbReference>
<dbReference type="InterPro" id="IPR035977">
    <property type="entry name" value="Ribosomal_bL36_sp"/>
</dbReference>
<dbReference type="NCBIfam" id="TIGR01022">
    <property type="entry name" value="rpmJ_bact"/>
    <property type="match status" value="1"/>
</dbReference>
<dbReference type="PANTHER" id="PTHR42888">
    <property type="entry name" value="50S RIBOSOMAL PROTEIN L36, CHLOROPLASTIC"/>
    <property type="match status" value="1"/>
</dbReference>
<dbReference type="PANTHER" id="PTHR42888:SF1">
    <property type="entry name" value="LARGE RIBOSOMAL SUBUNIT PROTEIN BL36C"/>
    <property type="match status" value="1"/>
</dbReference>
<dbReference type="Pfam" id="PF00444">
    <property type="entry name" value="Ribosomal_L36"/>
    <property type="match status" value="1"/>
</dbReference>
<dbReference type="SUPFAM" id="SSF57840">
    <property type="entry name" value="Ribosomal protein L36"/>
    <property type="match status" value="1"/>
</dbReference>
<dbReference type="PROSITE" id="PS00828">
    <property type="entry name" value="RIBOSOMAL_L36"/>
    <property type="match status" value="1"/>
</dbReference>
<name>RL36_GEOKA</name>
<protein>
    <recommendedName>
        <fullName evidence="1">Large ribosomal subunit protein bL36</fullName>
    </recommendedName>
    <alternativeName>
        <fullName evidence="2">50S ribosomal protein L36</fullName>
    </alternativeName>
</protein>
<sequence>MKVRPSVKPICEKCKVIRRRGKVMIICENPKHKQRQG</sequence>
<accession>Q5L3R5</accession>
<gene>
    <name evidence="1" type="primary">rpmJ</name>
    <name type="ordered locus">GK0130</name>
</gene>
<keyword id="KW-1185">Reference proteome</keyword>
<keyword id="KW-0687">Ribonucleoprotein</keyword>
<keyword id="KW-0689">Ribosomal protein</keyword>
<feature type="chain" id="PRO_0000302210" description="Large ribosomal subunit protein bL36">
    <location>
        <begin position="1"/>
        <end position="37"/>
    </location>
</feature>
<comment type="similarity">
    <text evidence="1">Belongs to the bacterial ribosomal protein bL36 family.</text>
</comment>